<comment type="function">
    <text evidence="1">Associates with the EF-Tu.GDP complex and induces the exchange of GDP to GTP. It remains bound to the aminoacyl-tRNA.EF-Tu.GTP complex up to the GTP hydrolysis stage on the ribosome.</text>
</comment>
<comment type="subcellular location">
    <subcellularLocation>
        <location evidence="1">Cytoplasm</location>
    </subcellularLocation>
</comment>
<comment type="similarity">
    <text evidence="1">Belongs to the EF-Ts family.</text>
</comment>
<sequence length="283" mass="30423">MAEITASLVKELRERTGAGMMDCKKALTEANGDIELAIENMRKSGAIKAAKKAGNVAADGVIKTKIDGNYGIILEVNCQTDFVAKDAGFQAFADKVLDAAVAGKITDVEVLKAQFEEERVALVAKIGENINIRRVAALEGDVLGSYQHGARIGVLVAAKGADEELVKHIAMHVAASKPEFIKPEDVSAEVVEKEYQVQLDIAMQSGKPKEIAEKMVEGRMKKFTGEVSLTGQPFVMEPSKTVGQLLKEHNAEVTGFIRFEVGEGIEKVETDFAAEVAAMSKQS</sequence>
<reference key="1">
    <citation type="journal article" date="2006" name="BMC Genomics">
        <title>Complete genome sequence of Shigella flexneri 5b and comparison with Shigella flexneri 2a.</title>
        <authorList>
            <person name="Nie H."/>
            <person name="Yang F."/>
            <person name="Zhang X."/>
            <person name="Yang J."/>
            <person name="Chen L."/>
            <person name="Wang J."/>
            <person name="Xiong Z."/>
            <person name="Peng J."/>
            <person name="Sun L."/>
            <person name="Dong J."/>
            <person name="Xue Y."/>
            <person name="Xu X."/>
            <person name="Chen S."/>
            <person name="Yao Z."/>
            <person name="Shen Y."/>
            <person name="Jin Q."/>
        </authorList>
    </citation>
    <scope>NUCLEOTIDE SEQUENCE [LARGE SCALE GENOMIC DNA]</scope>
    <source>
        <strain>8401</strain>
    </source>
</reference>
<proteinExistence type="inferred from homology"/>
<organism>
    <name type="scientific">Shigella flexneri serotype 5b (strain 8401)</name>
    <dbReference type="NCBI Taxonomy" id="373384"/>
    <lineage>
        <taxon>Bacteria</taxon>
        <taxon>Pseudomonadati</taxon>
        <taxon>Pseudomonadota</taxon>
        <taxon>Gammaproteobacteria</taxon>
        <taxon>Enterobacterales</taxon>
        <taxon>Enterobacteriaceae</taxon>
        <taxon>Shigella</taxon>
    </lineage>
</organism>
<keyword id="KW-0963">Cytoplasm</keyword>
<keyword id="KW-0251">Elongation factor</keyword>
<keyword id="KW-0648">Protein biosynthesis</keyword>
<dbReference type="EMBL" id="CP000266">
    <property type="protein sequence ID" value="ABF02437.1"/>
    <property type="molecule type" value="Genomic_DNA"/>
</dbReference>
<dbReference type="RefSeq" id="WP_000818114.1">
    <property type="nucleotide sequence ID" value="NC_008258.1"/>
</dbReference>
<dbReference type="SMR" id="Q0T839"/>
<dbReference type="GeneID" id="93777255"/>
<dbReference type="KEGG" id="sfv:SFV_0153"/>
<dbReference type="HOGENOM" id="CLU_047155_0_2_6"/>
<dbReference type="Proteomes" id="UP000000659">
    <property type="component" value="Chromosome"/>
</dbReference>
<dbReference type="GO" id="GO:0005737">
    <property type="term" value="C:cytoplasm"/>
    <property type="evidence" value="ECO:0007669"/>
    <property type="project" value="UniProtKB-SubCell"/>
</dbReference>
<dbReference type="GO" id="GO:0003746">
    <property type="term" value="F:translation elongation factor activity"/>
    <property type="evidence" value="ECO:0007669"/>
    <property type="project" value="UniProtKB-UniRule"/>
</dbReference>
<dbReference type="CDD" id="cd14275">
    <property type="entry name" value="UBA_EF-Ts"/>
    <property type="match status" value="1"/>
</dbReference>
<dbReference type="FunFam" id="1.10.286.20:FF:000001">
    <property type="entry name" value="Elongation factor Ts"/>
    <property type="match status" value="1"/>
</dbReference>
<dbReference type="FunFam" id="1.10.8.10:FF:000001">
    <property type="entry name" value="Elongation factor Ts"/>
    <property type="match status" value="1"/>
</dbReference>
<dbReference type="FunFam" id="3.30.479.20:FF:000001">
    <property type="entry name" value="Elongation factor Ts"/>
    <property type="match status" value="1"/>
</dbReference>
<dbReference type="Gene3D" id="1.10.286.20">
    <property type="match status" value="1"/>
</dbReference>
<dbReference type="Gene3D" id="1.10.8.10">
    <property type="entry name" value="DNA helicase RuvA subunit, C-terminal domain"/>
    <property type="match status" value="1"/>
</dbReference>
<dbReference type="Gene3D" id="3.30.479.20">
    <property type="entry name" value="Elongation factor Ts, dimerisation domain"/>
    <property type="match status" value="2"/>
</dbReference>
<dbReference type="HAMAP" id="MF_00050">
    <property type="entry name" value="EF_Ts"/>
    <property type="match status" value="1"/>
</dbReference>
<dbReference type="InterPro" id="IPR036402">
    <property type="entry name" value="EF-Ts_dimer_sf"/>
</dbReference>
<dbReference type="InterPro" id="IPR001816">
    <property type="entry name" value="Transl_elong_EFTs/EF1B"/>
</dbReference>
<dbReference type="InterPro" id="IPR014039">
    <property type="entry name" value="Transl_elong_EFTs/EF1B_dimer"/>
</dbReference>
<dbReference type="InterPro" id="IPR018101">
    <property type="entry name" value="Transl_elong_Ts_CS"/>
</dbReference>
<dbReference type="InterPro" id="IPR009060">
    <property type="entry name" value="UBA-like_sf"/>
</dbReference>
<dbReference type="NCBIfam" id="TIGR00116">
    <property type="entry name" value="tsf"/>
    <property type="match status" value="1"/>
</dbReference>
<dbReference type="PANTHER" id="PTHR11741">
    <property type="entry name" value="ELONGATION FACTOR TS"/>
    <property type="match status" value="1"/>
</dbReference>
<dbReference type="PANTHER" id="PTHR11741:SF0">
    <property type="entry name" value="ELONGATION FACTOR TS, MITOCHONDRIAL"/>
    <property type="match status" value="1"/>
</dbReference>
<dbReference type="Pfam" id="PF00889">
    <property type="entry name" value="EF_TS"/>
    <property type="match status" value="1"/>
</dbReference>
<dbReference type="SUPFAM" id="SSF54713">
    <property type="entry name" value="Elongation factor Ts (EF-Ts), dimerisation domain"/>
    <property type="match status" value="2"/>
</dbReference>
<dbReference type="SUPFAM" id="SSF46934">
    <property type="entry name" value="UBA-like"/>
    <property type="match status" value="1"/>
</dbReference>
<dbReference type="PROSITE" id="PS01126">
    <property type="entry name" value="EF_TS_1"/>
    <property type="match status" value="1"/>
</dbReference>
<dbReference type="PROSITE" id="PS01127">
    <property type="entry name" value="EF_TS_2"/>
    <property type="match status" value="1"/>
</dbReference>
<feature type="chain" id="PRO_1000006183" description="Elongation factor Ts">
    <location>
        <begin position="1"/>
        <end position="283"/>
    </location>
</feature>
<feature type="region of interest" description="Involved in Mg(2+) ion dislocation from EF-Tu" evidence="1">
    <location>
        <begin position="80"/>
        <end position="83"/>
    </location>
</feature>
<evidence type="ECO:0000255" key="1">
    <source>
        <dbReference type="HAMAP-Rule" id="MF_00050"/>
    </source>
</evidence>
<gene>
    <name evidence="1" type="primary">tsf</name>
    <name type="ordered locus">SFV_0153</name>
</gene>
<protein>
    <recommendedName>
        <fullName evidence="1">Elongation factor Ts</fullName>
        <shortName evidence="1">EF-Ts</shortName>
    </recommendedName>
</protein>
<name>EFTS_SHIF8</name>
<accession>Q0T839</accession>